<feature type="chain" id="PRO_1000048521" description="DNA replication and repair protein RecF">
    <location>
        <begin position="1"/>
        <end position="357"/>
    </location>
</feature>
<feature type="binding site" evidence="1">
    <location>
        <begin position="30"/>
        <end position="37"/>
    </location>
    <ligand>
        <name>ATP</name>
        <dbReference type="ChEBI" id="CHEBI:30616"/>
    </ligand>
</feature>
<protein>
    <recommendedName>
        <fullName evidence="1">DNA replication and repair protein RecF</fullName>
    </recommendedName>
</protein>
<evidence type="ECO:0000255" key="1">
    <source>
        <dbReference type="HAMAP-Rule" id="MF_00365"/>
    </source>
</evidence>
<dbReference type="EMBL" id="CP000468">
    <property type="protein sequence ID" value="ABJ03175.1"/>
    <property type="molecule type" value="Genomic_DNA"/>
</dbReference>
<dbReference type="RefSeq" id="WP_000060112.1">
    <property type="nucleotide sequence ID" value="NZ_CADILS010000011.1"/>
</dbReference>
<dbReference type="SMR" id="A1AHN5"/>
<dbReference type="GeneID" id="93778441"/>
<dbReference type="KEGG" id="ecv:APECO1_2757"/>
<dbReference type="HOGENOM" id="CLU_040267_0_0_6"/>
<dbReference type="Proteomes" id="UP000008216">
    <property type="component" value="Chromosome"/>
</dbReference>
<dbReference type="GO" id="GO:0005737">
    <property type="term" value="C:cytoplasm"/>
    <property type="evidence" value="ECO:0007669"/>
    <property type="project" value="UniProtKB-SubCell"/>
</dbReference>
<dbReference type="GO" id="GO:0005524">
    <property type="term" value="F:ATP binding"/>
    <property type="evidence" value="ECO:0007669"/>
    <property type="project" value="UniProtKB-UniRule"/>
</dbReference>
<dbReference type="GO" id="GO:0003697">
    <property type="term" value="F:single-stranded DNA binding"/>
    <property type="evidence" value="ECO:0007669"/>
    <property type="project" value="UniProtKB-UniRule"/>
</dbReference>
<dbReference type="GO" id="GO:0006260">
    <property type="term" value="P:DNA replication"/>
    <property type="evidence" value="ECO:0007669"/>
    <property type="project" value="UniProtKB-UniRule"/>
</dbReference>
<dbReference type="GO" id="GO:0000731">
    <property type="term" value="P:DNA synthesis involved in DNA repair"/>
    <property type="evidence" value="ECO:0007669"/>
    <property type="project" value="TreeGrafter"/>
</dbReference>
<dbReference type="GO" id="GO:0006302">
    <property type="term" value="P:double-strand break repair"/>
    <property type="evidence" value="ECO:0007669"/>
    <property type="project" value="TreeGrafter"/>
</dbReference>
<dbReference type="GO" id="GO:0009432">
    <property type="term" value="P:SOS response"/>
    <property type="evidence" value="ECO:0007669"/>
    <property type="project" value="UniProtKB-UniRule"/>
</dbReference>
<dbReference type="FunFam" id="1.20.1050.90:FF:000001">
    <property type="entry name" value="DNA replication and repair protein RecF"/>
    <property type="match status" value="1"/>
</dbReference>
<dbReference type="Gene3D" id="3.40.50.300">
    <property type="entry name" value="P-loop containing nucleotide triphosphate hydrolases"/>
    <property type="match status" value="1"/>
</dbReference>
<dbReference type="Gene3D" id="1.20.1050.90">
    <property type="entry name" value="RecF/RecN/SMC, N-terminal domain"/>
    <property type="match status" value="1"/>
</dbReference>
<dbReference type="HAMAP" id="MF_00365">
    <property type="entry name" value="RecF"/>
    <property type="match status" value="1"/>
</dbReference>
<dbReference type="InterPro" id="IPR001238">
    <property type="entry name" value="DNA-binding_RecF"/>
</dbReference>
<dbReference type="InterPro" id="IPR018078">
    <property type="entry name" value="DNA-binding_RecF_CS"/>
</dbReference>
<dbReference type="InterPro" id="IPR027417">
    <property type="entry name" value="P-loop_NTPase"/>
</dbReference>
<dbReference type="InterPro" id="IPR003395">
    <property type="entry name" value="RecF/RecN/SMC_N"/>
</dbReference>
<dbReference type="InterPro" id="IPR042174">
    <property type="entry name" value="RecF_2"/>
</dbReference>
<dbReference type="NCBIfam" id="TIGR00611">
    <property type="entry name" value="recf"/>
    <property type="match status" value="1"/>
</dbReference>
<dbReference type="PANTHER" id="PTHR32182">
    <property type="entry name" value="DNA REPLICATION AND REPAIR PROTEIN RECF"/>
    <property type="match status" value="1"/>
</dbReference>
<dbReference type="PANTHER" id="PTHR32182:SF0">
    <property type="entry name" value="DNA REPLICATION AND REPAIR PROTEIN RECF"/>
    <property type="match status" value="1"/>
</dbReference>
<dbReference type="Pfam" id="PF02463">
    <property type="entry name" value="SMC_N"/>
    <property type="match status" value="1"/>
</dbReference>
<dbReference type="SUPFAM" id="SSF52540">
    <property type="entry name" value="P-loop containing nucleoside triphosphate hydrolases"/>
    <property type="match status" value="1"/>
</dbReference>
<dbReference type="PROSITE" id="PS00617">
    <property type="entry name" value="RECF_1"/>
    <property type="match status" value="1"/>
</dbReference>
<dbReference type="PROSITE" id="PS00618">
    <property type="entry name" value="RECF_2"/>
    <property type="match status" value="1"/>
</dbReference>
<sequence>MSLTRLLIRDFRNIETADLALSPGFNFLVGANGSGKTSVLEAIYTLGHGRAFRSLQIGRVIRHEQEAFVLHGRLQGEERETAIGLTKDKQGDSKVRIDGTDGHKVAELAHLMPMQLITPEGFTLLNGGPKYRRAFLDWGCFHNEPGFFTAWSNLKRLLKQRNAALRQVTRYEQLRPWDKELIPLAEQISTWRAEYSAGIAADMADTCKQFLPEFSLTFSFQRGWEKETEYAEVLERNFERDRQLTYTAHGPHKADLRIRADGAPVEDTLSRGQLKLLMCALRLAQGEFLTRESGRRCLYLIDDFASELDDERRGLLASRLKATQSQVFVSAISAEHVIDMSDENSKMFTVEKGKITD</sequence>
<name>RECF_ECOK1</name>
<gene>
    <name evidence="1" type="primary">recF</name>
    <name type="ordered locus">Ecok1_36810</name>
    <name type="ORF">APECO1_2757</name>
</gene>
<organism>
    <name type="scientific">Escherichia coli O1:K1 / APEC</name>
    <dbReference type="NCBI Taxonomy" id="405955"/>
    <lineage>
        <taxon>Bacteria</taxon>
        <taxon>Pseudomonadati</taxon>
        <taxon>Pseudomonadota</taxon>
        <taxon>Gammaproteobacteria</taxon>
        <taxon>Enterobacterales</taxon>
        <taxon>Enterobacteriaceae</taxon>
        <taxon>Escherichia</taxon>
    </lineage>
</organism>
<proteinExistence type="inferred from homology"/>
<reference key="1">
    <citation type="journal article" date="2007" name="J. Bacteriol.">
        <title>The genome sequence of avian pathogenic Escherichia coli strain O1:K1:H7 shares strong similarities with human extraintestinal pathogenic E. coli genomes.</title>
        <authorList>
            <person name="Johnson T.J."/>
            <person name="Kariyawasam S."/>
            <person name="Wannemuehler Y."/>
            <person name="Mangiamele P."/>
            <person name="Johnson S.J."/>
            <person name="Doetkott C."/>
            <person name="Skyberg J.A."/>
            <person name="Lynne A.M."/>
            <person name="Johnson J.R."/>
            <person name="Nolan L.K."/>
        </authorList>
    </citation>
    <scope>NUCLEOTIDE SEQUENCE [LARGE SCALE GENOMIC DNA]</scope>
</reference>
<accession>A1AHN5</accession>
<comment type="function">
    <text evidence="1">The RecF protein is involved in DNA metabolism; it is required for DNA replication and normal SOS inducibility. RecF binds preferentially to single-stranded, linear DNA. It also seems to bind ATP.</text>
</comment>
<comment type="subcellular location">
    <subcellularLocation>
        <location evidence="1">Cytoplasm</location>
    </subcellularLocation>
</comment>
<comment type="similarity">
    <text evidence="1">Belongs to the RecF family.</text>
</comment>
<keyword id="KW-0067">ATP-binding</keyword>
<keyword id="KW-0963">Cytoplasm</keyword>
<keyword id="KW-0227">DNA damage</keyword>
<keyword id="KW-0234">DNA repair</keyword>
<keyword id="KW-0235">DNA replication</keyword>
<keyword id="KW-0238">DNA-binding</keyword>
<keyword id="KW-0547">Nucleotide-binding</keyword>
<keyword id="KW-1185">Reference proteome</keyword>
<keyword id="KW-0742">SOS response</keyword>